<organism>
    <name type="scientific">Lactobacillus acidophilus (strain ATCC 700396 / NCK56 / N2 / NCFM)</name>
    <dbReference type="NCBI Taxonomy" id="272621"/>
    <lineage>
        <taxon>Bacteria</taxon>
        <taxon>Bacillati</taxon>
        <taxon>Bacillota</taxon>
        <taxon>Bacilli</taxon>
        <taxon>Lactobacillales</taxon>
        <taxon>Lactobacillaceae</taxon>
        <taxon>Lactobacillus</taxon>
    </lineage>
</organism>
<proteinExistence type="inferred from homology"/>
<protein>
    <recommendedName>
        <fullName evidence="1">DNA-directed RNA polymerase subunit beta'</fullName>
        <shortName evidence="1">RNAP subunit beta'</shortName>
        <ecNumber evidence="1">2.7.7.6</ecNumber>
    </recommendedName>
    <alternativeName>
        <fullName evidence="1">RNA polymerase subunit beta'</fullName>
    </alternativeName>
    <alternativeName>
        <fullName evidence="1">Transcriptase subunit beta'</fullName>
    </alternativeName>
</protein>
<evidence type="ECO:0000255" key="1">
    <source>
        <dbReference type="HAMAP-Rule" id="MF_01322"/>
    </source>
</evidence>
<keyword id="KW-0240">DNA-directed RNA polymerase</keyword>
<keyword id="KW-0460">Magnesium</keyword>
<keyword id="KW-0479">Metal-binding</keyword>
<keyword id="KW-0548">Nucleotidyltransferase</keyword>
<keyword id="KW-1185">Reference proteome</keyword>
<keyword id="KW-0804">Transcription</keyword>
<keyword id="KW-0808">Transferase</keyword>
<keyword id="KW-0862">Zinc</keyword>
<feature type="chain" id="PRO_0000225542" description="DNA-directed RNA polymerase subunit beta'">
    <location>
        <begin position="1"/>
        <end position="1217"/>
    </location>
</feature>
<feature type="binding site" evidence="1">
    <location>
        <position position="60"/>
    </location>
    <ligand>
        <name>Zn(2+)</name>
        <dbReference type="ChEBI" id="CHEBI:29105"/>
        <label>1</label>
    </ligand>
</feature>
<feature type="binding site" evidence="1">
    <location>
        <position position="62"/>
    </location>
    <ligand>
        <name>Zn(2+)</name>
        <dbReference type="ChEBI" id="CHEBI:29105"/>
        <label>1</label>
    </ligand>
</feature>
<feature type="binding site" evidence="1">
    <location>
        <position position="75"/>
    </location>
    <ligand>
        <name>Zn(2+)</name>
        <dbReference type="ChEBI" id="CHEBI:29105"/>
        <label>1</label>
    </ligand>
</feature>
<feature type="binding site" evidence="1">
    <location>
        <position position="78"/>
    </location>
    <ligand>
        <name>Zn(2+)</name>
        <dbReference type="ChEBI" id="CHEBI:29105"/>
        <label>1</label>
    </ligand>
</feature>
<feature type="binding site" evidence="1">
    <location>
        <position position="449"/>
    </location>
    <ligand>
        <name>Mg(2+)</name>
        <dbReference type="ChEBI" id="CHEBI:18420"/>
    </ligand>
</feature>
<feature type="binding site" evidence="1">
    <location>
        <position position="451"/>
    </location>
    <ligand>
        <name>Mg(2+)</name>
        <dbReference type="ChEBI" id="CHEBI:18420"/>
    </ligand>
</feature>
<feature type="binding site" evidence="1">
    <location>
        <position position="453"/>
    </location>
    <ligand>
        <name>Mg(2+)</name>
        <dbReference type="ChEBI" id="CHEBI:18420"/>
    </ligand>
</feature>
<feature type="binding site" evidence="1">
    <location>
        <position position="821"/>
    </location>
    <ligand>
        <name>Zn(2+)</name>
        <dbReference type="ChEBI" id="CHEBI:29105"/>
        <label>2</label>
    </ligand>
</feature>
<feature type="binding site" evidence="1">
    <location>
        <position position="895"/>
    </location>
    <ligand>
        <name>Zn(2+)</name>
        <dbReference type="ChEBI" id="CHEBI:29105"/>
        <label>2</label>
    </ligand>
</feature>
<feature type="binding site" evidence="1">
    <location>
        <position position="902"/>
    </location>
    <ligand>
        <name>Zn(2+)</name>
        <dbReference type="ChEBI" id="CHEBI:29105"/>
        <label>2</label>
    </ligand>
</feature>
<feature type="binding site" evidence="1">
    <location>
        <position position="905"/>
    </location>
    <ligand>
        <name>Zn(2+)</name>
        <dbReference type="ChEBI" id="CHEBI:29105"/>
        <label>2</label>
    </ligand>
</feature>
<accession>Q5FM96</accession>
<gene>
    <name evidence="1" type="primary">rpoC</name>
    <name type="ordered locus">LBA0285</name>
</gene>
<dbReference type="EC" id="2.7.7.6" evidence="1"/>
<dbReference type="EMBL" id="CP000033">
    <property type="protein sequence ID" value="AAV42178.1"/>
    <property type="molecule type" value="Genomic_DNA"/>
</dbReference>
<dbReference type="RefSeq" id="WP_011254109.1">
    <property type="nucleotide sequence ID" value="NC_006814.3"/>
</dbReference>
<dbReference type="RefSeq" id="YP_193209.1">
    <property type="nucleotide sequence ID" value="NC_006814.3"/>
</dbReference>
<dbReference type="SMR" id="Q5FM96"/>
<dbReference type="STRING" id="272621.LBA0285"/>
<dbReference type="KEGG" id="lac:LBA0285"/>
<dbReference type="PATRIC" id="fig|272621.13.peg.270"/>
<dbReference type="eggNOG" id="COG0086">
    <property type="taxonomic scope" value="Bacteria"/>
</dbReference>
<dbReference type="HOGENOM" id="CLU_000524_3_1_9"/>
<dbReference type="OrthoDB" id="9815296at2"/>
<dbReference type="BioCyc" id="LACI272621:G1G49-279-MONOMER"/>
<dbReference type="Proteomes" id="UP000006381">
    <property type="component" value="Chromosome"/>
</dbReference>
<dbReference type="GO" id="GO:0000428">
    <property type="term" value="C:DNA-directed RNA polymerase complex"/>
    <property type="evidence" value="ECO:0007669"/>
    <property type="project" value="UniProtKB-KW"/>
</dbReference>
<dbReference type="GO" id="GO:0003677">
    <property type="term" value="F:DNA binding"/>
    <property type="evidence" value="ECO:0007669"/>
    <property type="project" value="UniProtKB-UniRule"/>
</dbReference>
<dbReference type="GO" id="GO:0003899">
    <property type="term" value="F:DNA-directed RNA polymerase activity"/>
    <property type="evidence" value="ECO:0007669"/>
    <property type="project" value="UniProtKB-UniRule"/>
</dbReference>
<dbReference type="GO" id="GO:0000287">
    <property type="term" value="F:magnesium ion binding"/>
    <property type="evidence" value="ECO:0007669"/>
    <property type="project" value="UniProtKB-UniRule"/>
</dbReference>
<dbReference type="GO" id="GO:0008270">
    <property type="term" value="F:zinc ion binding"/>
    <property type="evidence" value="ECO:0007669"/>
    <property type="project" value="UniProtKB-UniRule"/>
</dbReference>
<dbReference type="GO" id="GO:0006351">
    <property type="term" value="P:DNA-templated transcription"/>
    <property type="evidence" value="ECO:0007669"/>
    <property type="project" value="UniProtKB-UniRule"/>
</dbReference>
<dbReference type="CDD" id="cd02655">
    <property type="entry name" value="RNAP_beta'_C"/>
    <property type="match status" value="1"/>
</dbReference>
<dbReference type="CDD" id="cd01609">
    <property type="entry name" value="RNAP_beta'_N"/>
    <property type="match status" value="1"/>
</dbReference>
<dbReference type="FunFam" id="4.10.860.120:FF:000001">
    <property type="entry name" value="DNA-directed RNA polymerase subunit beta"/>
    <property type="match status" value="1"/>
</dbReference>
<dbReference type="Gene3D" id="1.10.132.30">
    <property type="match status" value="1"/>
</dbReference>
<dbReference type="Gene3D" id="1.10.150.390">
    <property type="match status" value="1"/>
</dbReference>
<dbReference type="Gene3D" id="1.10.1790.20">
    <property type="match status" value="1"/>
</dbReference>
<dbReference type="Gene3D" id="1.10.40.90">
    <property type="match status" value="1"/>
</dbReference>
<dbReference type="Gene3D" id="2.40.40.20">
    <property type="match status" value="1"/>
</dbReference>
<dbReference type="Gene3D" id="2.40.50.100">
    <property type="match status" value="1"/>
</dbReference>
<dbReference type="Gene3D" id="4.10.860.120">
    <property type="entry name" value="RNA polymerase II, clamp domain"/>
    <property type="match status" value="1"/>
</dbReference>
<dbReference type="Gene3D" id="1.10.274.100">
    <property type="entry name" value="RNA polymerase Rpb1, domain 3"/>
    <property type="match status" value="1"/>
</dbReference>
<dbReference type="HAMAP" id="MF_01322">
    <property type="entry name" value="RNApol_bact_RpoC"/>
    <property type="match status" value="1"/>
</dbReference>
<dbReference type="InterPro" id="IPR045867">
    <property type="entry name" value="DNA-dir_RpoC_beta_prime"/>
</dbReference>
<dbReference type="InterPro" id="IPR012754">
    <property type="entry name" value="DNA-dir_RpoC_beta_prime_bact"/>
</dbReference>
<dbReference type="InterPro" id="IPR000722">
    <property type="entry name" value="RNA_pol_asu"/>
</dbReference>
<dbReference type="InterPro" id="IPR006592">
    <property type="entry name" value="RNA_pol_N"/>
</dbReference>
<dbReference type="InterPro" id="IPR007080">
    <property type="entry name" value="RNA_pol_Rpb1_1"/>
</dbReference>
<dbReference type="InterPro" id="IPR007066">
    <property type="entry name" value="RNA_pol_Rpb1_3"/>
</dbReference>
<dbReference type="InterPro" id="IPR042102">
    <property type="entry name" value="RNA_pol_Rpb1_3_sf"/>
</dbReference>
<dbReference type="InterPro" id="IPR007083">
    <property type="entry name" value="RNA_pol_Rpb1_4"/>
</dbReference>
<dbReference type="InterPro" id="IPR007081">
    <property type="entry name" value="RNA_pol_Rpb1_5"/>
</dbReference>
<dbReference type="InterPro" id="IPR044893">
    <property type="entry name" value="RNA_pol_Rpb1_clamp_domain"/>
</dbReference>
<dbReference type="InterPro" id="IPR038120">
    <property type="entry name" value="Rpb1_funnel_sf"/>
</dbReference>
<dbReference type="NCBIfam" id="TIGR02386">
    <property type="entry name" value="rpoC_TIGR"/>
    <property type="match status" value="1"/>
</dbReference>
<dbReference type="PANTHER" id="PTHR19376">
    <property type="entry name" value="DNA-DIRECTED RNA POLYMERASE"/>
    <property type="match status" value="1"/>
</dbReference>
<dbReference type="PANTHER" id="PTHR19376:SF54">
    <property type="entry name" value="DNA-DIRECTED RNA POLYMERASE SUBUNIT BETA"/>
    <property type="match status" value="1"/>
</dbReference>
<dbReference type="Pfam" id="PF04997">
    <property type="entry name" value="RNA_pol_Rpb1_1"/>
    <property type="match status" value="1"/>
</dbReference>
<dbReference type="Pfam" id="PF00623">
    <property type="entry name" value="RNA_pol_Rpb1_2"/>
    <property type="match status" value="1"/>
</dbReference>
<dbReference type="Pfam" id="PF04983">
    <property type="entry name" value="RNA_pol_Rpb1_3"/>
    <property type="match status" value="1"/>
</dbReference>
<dbReference type="Pfam" id="PF05000">
    <property type="entry name" value="RNA_pol_Rpb1_4"/>
    <property type="match status" value="1"/>
</dbReference>
<dbReference type="Pfam" id="PF04998">
    <property type="entry name" value="RNA_pol_Rpb1_5"/>
    <property type="match status" value="1"/>
</dbReference>
<dbReference type="SMART" id="SM00663">
    <property type="entry name" value="RPOLA_N"/>
    <property type="match status" value="1"/>
</dbReference>
<dbReference type="SUPFAM" id="SSF64484">
    <property type="entry name" value="beta and beta-prime subunits of DNA dependent RNA-polymerase"/>
    <property type="match status" value="1"/>
</dbReference>
<comment type="function">
    <text evidence="1">DNA-dependent RNA polymerase catalyzes the transcription of DNA into RNA using the four ribonucleoside triphosphates as substrates.</text>
</comment>
<comment type="catalytic activity">
    <reaction evidence="1">
        <text>RNA(n) + a ribonucleoside 5'-triphosphate = RNA(n+1) + diphosphate</text>
        <dbReference type="Rhea" id="RHEA:21248"/>
        <dbReference type="Rhea" id="RHEA-COMP:14527"/>
        <dbReference type="Rhea" id="RHEA-COMP:17342"/>
        <dbReference type="ChEBI" id="CHEBI:33019"/>
        <dbReference type="ChEBI" id="CHEBI:61557"/>
        <dbReference type="ChEBI" id="CHEBI:140395"/>
        <dbReference type="EC" id="2.7.7.6"/>
    </reaction>
</comment>
<comment type="cofactor">
    <cofactor evidence="1">
        <name>Mg(2+)</name>
        <dbReference type="ChEBI" id="CHEBI:18420"/>
    </cofactor>
    <text evidence="1">Binds 1 Mg(2+) ion per subunit.</text>
</comment>
<comment type="cofactor">
    <cofactor evidence="1">
        <name>Zn(2+)</name>
        <dbReference type="ChEBI" id="CHEBI:29105"/>
    </cofactor>
    <text evidence="1">Binds 2 Zn(2+) ions per subunit.</text>
</comment>
<comment type="subunit">
    <text evidence="1">The RNAP catalytic core consists of 2 alpha, 1 beta, 1 beta' and 1 omega subunit. When a sigma factor is associated with the core the holoenzyme is formed, which can initiate transcription.</text>
</comment>
<comment type="similarity">
    <text evidence="1">Belongs to the RNA polymerase beta' chain family.</text>
</comment>
<sequence length="1217" mass="135745">MIDVNKFESMQIGLASPNKIRSWSYGEVKKPETINYRTLKPEKDGLFDERIFGPTKDWSCACGKYKGVRYRGIVCDRCGVEVTSSKVRRERMGHIELAAPVTHIWYFKGIPSRMGLVLDISPRLLEEVIYFAAYIVIDPGDTDLEPKQLLTEAEYREQKAKYGNRFEAKMGAEAIRELLKKVDLDKEVKNLKKELQTATGQKRTRAIRRLDILDAFKNSGNKPEWMVMDAVPVIPPDLRPMVQLEGGRFATSDLNDLYRRVINRNNRLKRLLDLNAPNIIVQNEKRMLQEAVDALIDNGRRGRPVVGPGNRPLKSLSHMLKGKQGRFRQNLLGKRVDYSGRSVIDVSPKLKFYQCGVPRPMALELFKPFVMHELVKRGIASNIKNAKRKIDREDDDIWDVLEDVIKERPVLLNRAPTLHRLSIQAFEPVLVPGKSIRLHPLACEAYNADFDGDQMAIHVPLSDEAVAESRLLMLAAHHILAPKDGKPIVTPSQDVVLGNYWLTQAERGREGEGMIFSSPAEATVAYENGDIHYHTIIGMSADAMPKKPWPKGHEHGIFITTYGKLVFNQLFPDDYFYVNEPTEKNLNDPLDAKYFLNEGEDINSKINEVADDLIASPFKSSFLSDSIATIYKYYKVQRTSEYLDDLKELGYTSSTTSGITIGMNDVPEIGDKDEKVAKARKQVDVVSKQFRRGLITEQERHDRVISIWNACKDEIQNEIAQIHSPRNPISIMADSGARGNISNFTQLAGMRGLMATPNGGLFEIPVTSNFKEGLSVLELFMSTHGARKGMTDTALKTAQSGYLTRRLVDVAQDVIIRDDDCGTDRGITVSAIMEGDEMIEPLFDRLVGRFTAETVKDPETGEAIVGRDVMMDENMAHKICDAGVTHVKIRSILTCDTPHGVCRKCYGMNLATGEEVEVGEAVGTVAAQSIGEPGTQLTLRTFHNGGVAGAEDITQGLPRVQELFEARNPKGRATISEVDGVIDSIQENPAEHTREITVKGKIDTRSYSVPYTASVAVSEGDYVHRGDKLTLGSVDPKELIQVTDTLTTEKYILAEVQKAYRMQGVDIADKHVEVLTRQMLQKVRVLDPGETDILPGEVMDIGQFRDRNKEVIISGGIPATAQSIILSITKAALETNSFLSAASFQETTRVLTDASIRGKNDPLLGLKENVIIGKIIPAGTGMPIYRSMEPEADVKKPDSVYSIADIEKQMKEKDKTK</sequence>
<reference key="1">
    <citation type="journal article" date="2005" name="Proc. Natl. Acad. Sci. U.S.A.">
        <title>Complete genome sequence of the probiotic lactic acid bacterium Lactobacillus acidophilus NCFM.</title>
        <authorList>
            <person name="Altermann E."/>
            <person name="Russell W.M."/>
            <person name="Azcarate-Peril M.A."/>
            <person name="Barrangou R."/>
            <person name="Buck B.L."/>
            <person name="McAuliffe O."/>
            <person name="Souther N."/>
            <person name="Dobson A."/>
            <person name="Duong T."/>
            <person name="Callanan M."/>
            <person name="Lick S."/>
            <person name="Hamrick A."/>
            <person name="Cano R."/>
            <person name="Klaenhammer T.R."/>
        </authorList>
    </citation>
    <scope>NUCLEOTIDE SEQUENCE [LARGE SCALE GENOMIC DNA]</scope>
    <source>
        <strain>ATCC 700396 / NCK56 / N2 / NCFM</strain>
    </source>
</reference>
<name>RPOC_LACAC</name>